<reference key="1">
    <citation type="journal article" date="2000" name="Nature">
        <title>Sequence and analysis of chromosome 1 of the plant Arabidopsis thaliana.</title>
        <authorList>
            <person name="Theologis A."/>
            <person name="Ecker J.R."/>
            <person name="Palm C.J."/>
            <person name="Federspiel N.A."/>
            <person name="Kaul S."/>
            <person name="White O."/>
            <person name="Alonso J."/>
            <person name="Altafi H."/>
            <person name="Araujo R."/>
            <person name="Bowman C.L."/>
            <person name="Brooks S.Y."/>
            <person name="Buehler E."/>
            <person name="Chan A."/>
            <person name="Chao Q."/>
            <person name="Chen H."/>
            <person name="Cheuk R.F."/>
            <person name="Chin C.W."/>
            <person name="Chung M.K."/>
            <person name="Conn L."/>
            <person name="Conway A.B."/>
            <person name="Conway A.R."/>
            <person name="Creasy T.H."/>
            <person name="Dewar K."/>
            <person name="Dunn P."/>
            <person name="Etgu P."/>
            <person name="Feldblyum T.V."/>
            <person name="Feng J.-D."/>
            <person name="Fong B."/>
            <person name="Fujii C.Y."/>
            <person name="Gill J.E."/>
            <person name="Goldsmith A.D."/>
            <person name="Haas B."/>
            <person name="Hansen N.F."/>
            <person name="Hughes B."/>
            <person name="Huizar L."/>
            <person name="Hunter J.L."/>
            <person name="Jenkins J."/>
            <person name="Johnson-Hopson C."/>
            <person name="Khan S."/>
            <person name="Khaykin E."/>
            <person name="Kim C.J."/>
            <person name="Koo H.L."/>
            <person name="Kremenetskaia I."/>
            <person name="Kurtz D.B."/>
            <person name="Kwan A."/>
            <person name="Lam B."/>
            <person name="Langin-Hooper S."/>
            <person name="Lee A."/>
            <person name="Lee J.M."/>
            <person name="Lenz C.A."/>
            <person name="Li J.H."/>
            <person name="Li Y.-P."/>
            <person name="Lin X."/>
            <person name="Liu S.X."/>
            <person name="Liu Z.A."/>
            <person name="Luros J.S."/>
            <person name="Maiti R."/>
            <person name="Marziali A."/>
            <person name="Militscher J."/>
            <person name="Miranda M."/>
            <person name="Nguyen M."/>
            <person name="Nierman W.C."/>
            <person name="Osborne B.I."/>
            <person name="Pai G."/>
            <person name="Peterson J."/>
            <person name="Pham P.K."/>
            <person name="Rizzo M."/>
            <person name="Rooney T."/>
            <person name="Rowley D."/>
            <person name="Sakano H."/>
            <person name="Salzberg S.L."/>
            <person name="Schwartz J.R."/>
            <person name="Shinn P."/>
            <person name="Southwick A.M."/>
            <person name="Sun H."/>
            <person name="Tallon L.J."/>
            <person name="Tambunga G."/>
            <person name="Toriumi M.J."/>
            <person name="Town C.D."/>
            <person name="Utterback T."/>
            <person name="Van Aken S."/>
            <person name="Vaysberg M."/>
            <person name="Vysotskaia V.S."/>
            <person name="Walker M."/>
            <person name="Wu D."/>
            <person name="Yu G."/>
            <person name="Fraser C.M."/>
            <person name="Venter J.C."/>
            <person name="Davis R.W."/>
        </authorList>
    </citation>
    <scope>NUCLEOTIDE SEQUENCE [LARGE SCALE GENOMIC DNA]</scope>
    <source>
        <strain>cv. Columbia</strain>
    </source>
</reference>
<reference key="2">
    <citation type="journal article" date="2017" name="Plant J.">
        <title>Araport11: a complete reannotation of the Arabidopsis thaliana reference genome.</title>
        <authorList>
            <person name="Cheng C.Y."/>
            <person name="Krishnakumar V."/>
            <person name="Chan A.P."/>
            <person name="Thibaud-Nissen F."/>
            <person name="Schobel S."/>
            <person name="Town C.D."/>
        </authorList>
    </citation>
    <scope>GENOME REANNOTATION</scope>
    <source>
        <strain>cv. Columbia</strain>
    </source>
</reference>
<reference key="3">
    <citation type="journal article" date="2003" name="Science">
        <title>Empirical analysis of transcriptional activity in the Arabidopsis genome.</title>
        <authorList>
            <person name="Yamada K."/>
            <person name="Lim J."/>
            <person name="Dale J.M."/>
            <person name="Chen H."/>
            <person name="Shinn P."/>
            <person name="Palm C.J."/>
            <person name="Southwick A.M."/>
            <person name="Wu H.C."/>
            <person name="Kim C.J."/>
            <person name="Nguyen M."/>
            <person name="Pham P.K."/>
            <person name="Cheuk R.F."/>
            <person name="Karlin-Newmann G."/>
            <person name="Liu S.X."/>
            <person name="Lam B."/>
            <person name="Sakano H."/>
            <person name="Wu T."/>
            <person name="Yu G."/>
            <person name="Miranda M."/>
            <person name="Quach H.L."/>
            <person name="Tripp M."/>
            <person name="Chang C.H."/>
            <person name="Lee J.M."/>
            <person name="Toriumi M.J."/>
            <person name="Chan M.M."/>
            <person name="Tang C.C."/>
            <person name="Onodera C.S."/>
            <person name="Deng J.M."/>
            <person name="Akiyama K."/>
            <person name="Ansari Y."/>
            <person name="Arakawa T."/>
            <person name="Banh J."/>
            <person name="Banno F."/>
            <person name="Bowser L."/>
            <person name="Brooks S.Y."/>
            <person name="Carninci P."/>
            <person name="Chao Q."/>
            <person name="Choy N."/>
            <person name="Enju A."/>
            <person name="Goldsmith A.D."/>
            <person name="Gurjal M."/>
            <person name="Hansen N.F."/>
            <person name="Hayashizaki Y."/>
            <person name="Johnson-Hopson C."/>
            <person name="Hsuan V.W."/>
            <person name="Iida K."/>
            <person name="Karnes M."/>
            <person name="Khan S."/>
            <person name="Koesema E."/>
            <person name="Ishida J."/>
            <person name="Jiang P.X."/>
            <person name="Jones T."/>
            <person name="Kawai J."/>
            <person name="Kamiya A."/>
            <person name="Meyers C."/>
            <person name="Nakajima M."/>
            <person name="Narusaka M."/>
            <person name="Seki M."/>
            <person name="Sakurai T."/>
            <person name="Satou M."/>
            <person name="Tamse R."/>
            <person name="Vaysberg M."/>
            <person name="Wallender E.K."/>
            <person name="Wong C."/>
            <person name="Yamamura Y."/>
            <person name="Yuan S."/>
            <person name="Shinozaki K."/>
            <person name="Davis R.W."/>
            <person name="Theologis A."/>
            <person name="Ecker J.R."/>
        </authorList>
    </citation>
    <scope>NUCLEOTIDE SEQUENCE [LARGE SCALE MRNA]</scope>
    <source>
        <strain>cv. Columbia</strain>
    </source>
</reference>
<reference key="4">
    <citation type="journal article" date="1996" name="Mol. Biotechnol.">
        <title>Identification of cDNAs encoding isoprenylated proteins.</title>
        <authorList>
            <person name="Crowell D.N."/>
            <person name="Biermann B.J."/>
            <person name="Randall S.K."/>
        </authorList>
    </citation>
    <scope>NUCLEOTIDE SEQUENCE [MRNA] OF 41-152</scope>
</reference>
<reference key="5">
    <citation type="journal article" date="2009" name="Plant Mol. Biol.">
        <title>Stress induced and nuclear localized HIPP26 from Arabidopsis thaliana interacts via its heavy metal associated domain with the drought stress related zinc finger transcription factor ATHB29.</title>
        <authorList>
            <person name="Barth O."/>
            <person name="Vogt S."/>
            <person name="Uhlemann R."/>
            <person name="Zschiesche W."/>
            <person name="Humbeck K."/>
        </authorList>
    </citation>
    <scope>INTERACTION WITH ZHD11/HB29</scope>
    <source>
        <strain>cv. Columbia</strain>
    </source>
</reference>
<reference key="6">
    <citation type="journal article" date="2010" name="Metallomics">
        <title>Metallochaperone-like genes in Arabidopsis thaliana.</title>
        <authorList>
            <person name="Tehseen M."/>
            <person name="Cairns N."/>
            <person name="Sherson S."/>
            <person name="Cobbett C.S."/>
        </authorList>
    </citation>
    <scope>FUNCTION</scope>
    <scope>TISSUE SPECIFICITY</scope>
    <scope>NOMENCLATURE</scope>
    <scope>GENE FAMILY</scope>
    <scope>DISRUPTION PHENOTYPE</scope>
</reference>
<reference key="7">
    <citation type="journal article" date="2013" name="FEBS J.">
        <title>Heavy metal-associated isoprenylated plant protein (HIPP): characterization of a family of proteins exclusive to plants.</title>
        <authorList>
            <person name="de Abreu-Neto J.B."/>
            <person name="Turchetto-Zolet A.C."/>
            <person name="de Oliveira L.F."/>
            <person name="Zanettini M.H."/>
            <person name="Margis-Pinheiro M."/>
        </authorList>
    </citation>
    <scope>GENE FAMILY</scope>
    <scope>NOMENCLATURE</scope>
</reference>
<feature type="chain" id="PRO_0000435859" description="Heavy metal-associated isoprenylated plant protein 22">
    <location>
        <begin position="1"/>
        <end position="149"/>
    </location>
</feature>
<feature type="propeptide" id="PRO_0000435860" description="Removed in mature form" evidence="9">
    <location>
        <begin position="150"/>
        <end position="152"/>
    </location>
</feature>
<feature type="domain" description="HMA" evidence="2">
    <location>
        <begin position="28"/>
        <end position="91"/>
    </location>
</feature>
<feature type="region of interest" description="Disordered" evidence="3">
    <location>
        <begin position="123"/>
        <end position="152"/>
    </location>
</feature>
<feature type="compositionally biased region" description="Polar residues" evidence="3">
    <location>
        <begin position="142"/>
        <end position="152"/>
    </location>
</feature>
<feature type="binding site" evidence="2">
    <location>
        <position position="39"/>
    </location>
    <ligand>
        <name>a metal cation</name>
        <dbReference type="ChEBI" id="CHEBI:25213"/>
    </ligand>
</feature>
<feature type="binding site" evidence="2">
    <location>
        <position position="42"/>
    </location>
    <ligand>
        <name>a metal cation</name>
        <dbReference type="ChEBI" id="CHEBI:25213"/>
    </ligand>
</feature>
<feature type="modified residue" description="Cysteine methyl ester" evidence="1">
    <location>
        <position position="149"/>
    </location>
</feature>
<feature type="lipid moiety-binding region" description="S-farnesyl cysteine" evidence="1">
    <location>
        <position position="149"/>
    </location>
</feature>
<feature type="sequence conflict" description="In Ref. 4; AAD09511." evidence="9" ref="4">
    <original>S</original>
    <variation>N</variation>
    <location>
        <position position="85"/>
    </location>
</feature>
<proteinExistence type="evidence at protein level"/>
<comment type="function">
    <text evidence="5">Heavy-metal-binding protein. Binds cadmium. May be involved in cadmium transport and play a role in cadmium detoxification.</text>
</comment>
<comment type="subunit">
    <text evidence="4">Interacts with ZHD11/HB29.</text>
</comment>
<comment type="subcellular location">
    <subcellularLocation>
        <location evidence="1">Membrane</location>
    </subcellularLocation>
</comment>
<comment type="tissue specificity">
    <text evidence="5">Expressed in lateral roots and mature anthers.</text>
</comment>
<comment type="disruption phenotype">
    <text evidence="5">No visible phenotype. Hipp20, hipp21 and hipp22 triple mutants are cadmium sensitive.</text>
</comment>
<comment type="similarity">
    <text evidence="9">Belongs to the HIPP family.</text>
</comment>
<keyword id="KW-0104">Cadmium</keyword>
<keyword id="KW-0449">Lipoprotein</keyword>
<keyword id="KW-0472">Membrane</keyword>
<keyword id="KW-0479">Metal-binding</keyword>
<keyword id="KW-0488">Methylation</keyword>
<keyword id="KW-0636">Prenylation</keyword>
<keyword id="KW-1185">Reference proteome</keyword>
<sequence length="152" mass="17107">MGALNYLSEYFSNHFYVSIRKRKKRKVMQTVNIKVKIDCDGCERKIKNAVSSIKGAKSVEVNRKMHKVTVSGYVDPKKVLKTVQSTGKKKAELWPYVPYTMVAYPYAAGAYDKRAPPGFVRKSEQAQAQPGSTDDKLMSLFSDENPNACTVM</sequence>
<protein>
    <recommendedName>
        <fullName evidence="6 7">Heavy metal-associated isoprenylated plant protein 22</fullName>
        <shortName evidence="7">AtHIP22</shortName>
        <shortName evidence="6 7">AtHIPP22</shortName>
    </recommendedName>
    <alternativeName>
        <fullName evidence="8">Farnesylated protein 7</fullName>
        <shortName evidence="8">AtFP7</shortName>
    </alternativeName>
</protein>
<evidence type="ECO:0000250" key="1">
    <source>
        <dbReference type="UniProtKB" id="Q9SZN7"/>
    </source>
</evidence>
<evidence type="ECO:0000255" key="2">
    <source>
        <dbReference type="PROSITE-ProRule" id="PRU00280"/>
    </source>
</evidence>
<evidence type="ECO:0000256" key="3">
    <source>
        <dbReference type="SAM" id="MobiDB-lite"/>
    </source>
</evidence>
<evidence type="ECO:0000269" key="4">
    <source>
    </source>
</evidence>
<evidence type="ECO:0000269" key="5">
    <source>
    </source>
</evidence>
<evidence type="ECO:0000303" key="6">
    <source>
    </source>
</evidence>
<evidence type="ECO:0000303" key="7">
    <source>
    </source>
</evidence>
<evidence type="ECO:0000303" key="8">
    <source>
    </source>
</evidence>
<evidence type="ECO:0000305" key="9"/>
<evidence type="ECO:0000312" key="10">
    <source>
        <dbReference type="Araport" id="AT1G22990"/>
    </source>
</evidence>
<evidence type="ECO:0000312" key="11">
    <source>
        <dbReference type="EMBL" id="AF000657"/>
    </source>
</evidence>
<name>HIP22_ARATH</name>
<dbReference type="EMBL" id="AF000657">
    <property type="status" value="NOT_ANNOTATED_CDS"/>
    <property type="molecule type" value="Genomic_DNA"/>
</dbReference>
<dbReference type="EMBL" id="CP002684">
    <property type="protein sequence ID" value="AEE30319.1"/>
    <property type="molecule type" value="Genomic_DNA"/>
</dbReference>
<dbReference type="EMBL" id="AF370526">
    <property type="protein sequence ID" value="AAK48953.1"/>
    <property type="molecule type" value="mRNA"/>
</dbReference>
<dbReference type="EMBL" id="AF446887">
    <property type="protein sequence ID" value="AAL38620.1"/>
    <property type="molecule type" value="mRNA"/>
</dbReference>
<dbReference type="EMBL" id="AY052659">
    <property type="protein sequence ID" value="AAK96563.1"/>
    <property type="molecule type" value="mRNA"/>
</dbReference>
<dbReference type="EMBL" id="AY072474">
    <property type="protein sequence ID" value="AAL66889.1"/>
    <property type="molecule type" value="mRNA"/>
</dbReference>
<dbReference type="EMBL" id="U64910">
    <property type="protein sequence ID" value="AAD09511.1"/>
    <property type="molecule type" value="mRNA"/>
</dbReference>
<dbReference type="RefSeq" id="NP_173712.1">
    <property type="nucleotide sequence ID" value="NM_102147.3"/>
</dbReference>
<dbReference type="SMR" id="Q93VP2"/>
<dbReference type="FunCoup" id="Q93VP2">
    <property type="interactions" value="48"/>
</dbReference>
<dbReference type="IntAct" id="Q93VP2">
    <property type="interactions" value="1"/>
</dbReference>
<dbReference type="STRING" id="3702.Q93VP2"/>
<dbReference type="PaxDb" id="3702-AT1G22990.1"/>
<dbReference type="ProteomicsDB" id="230330"/>
<dbReference type="EnsemblPlants" id="AT1G22990.1">
    <property type="protein sequence ID" value="AT1G22990.1"/>
    <property type="gene ID" value="AT1G22990"/>
</dbReference>
<dbReference type="GeneID" id="838907"/>
<dbReference type="Gramene" id="AT1G22990.1">
    <property type="protein sequence ID" value="AT1G22990.1"/>
    <property type="gene ID" value="AT1G22990"/>
</dbReference>
<dbReference type="KEGG" id="ath:AT1G22990"/>
<dbReference type="Araport" id="AT1G22990"/>
<dbReference type="TAIR" id="AT1G22990">
    <property type="gene designation" value="HIPP22"/>
</dbReference>
<dbReference type="eggNOG" id="KOG1603">
    <property type="taxonomic scope" value="Eukaryota"/>
</dbReference>
<dbReference type="HOGENOM" id="CLU_100095_1_0_1"/>
<dbReference type="InParanoid" id="Q93VP2"/>
<dbReference type="OMA" id="DNPNACL"/>
<dbReference type="OrthoDB" id="689350at2759"/>
<dbReference type="PhylomeDB" id="Q93VP2"/>
<dbReference type="PRO" id="PR:Q93VP2"/>
<dbReference type="Proteomes" id="UP000006548">
    <property type="component" value="Chromosome 1"/>
</dbReference>
<dbReference type="ExpressionAtlas" id="Q93VP2">
    <property type="expression patterns" value="baseline and differential"/>
</dbReference>
<dbReference type="GO" id="GO:0016020">
    <property type="term" value="C:membrane"/>
    <property type="evidence" value="ECO:0007669"/>
    <property type="project" value="UniProtKB-SubCell"/>
</dbReference>
<dbReference type="GO" id="GO:0046872">
    <property type="term" value="F:metal ion binding"/>
    <property type="evidence" value="ECO:0007669"/>
    <property type="project" value="UniProtKB-KW"/>
</dbReference>
<dbReference type="GO" id="GO:0071585">
    <property type="term" value="P:detoxification of cadmium ion"/>
    <property type="evidence" value="ECO:0000315"/>
    <property type="project" value="UniProtKB"/>
</dbReference>
<dbReference type="CDD" id="cd00371">
    <property type="entry name" value="HMA"/>
    <property type="match status" value="1"/>
</dbReference>
<dbReference type="FunFam" id="3.30.70.100:FF:000035">
    <property type="entry name" value="Heavy metal-associated isoprenylated plant protein 26"/>
    <property type="match status" value="1"/>
</dbReference>
<dbReference type="Gene3D" id="3.30.70.100">
    <property type="match status" value="1"/>
</dbReference>
<dbReference type="InterPro" id="IPR006121">
    <property type="entry name" value="HMA_dom"/>
</dbReference>
<dbReference type="InterPro" id="IPR036163">
    <property type="entry name" value="HMA_dom_sf"/>
</dbReference>
<dbReference type="PANTHER" id="PTHR22814">
    <property type="entry name" value="COPPER TRANSPORT PROTEIN ATOX1-RELATED"/>
    <property type="match status" value="1"/>
</dbReference>
<dbReference type="PANTHER" id="PTHR22814:SF293">
    <property type="entry name" value="HEAVY METAL-ASSOCIATED ISOPRENYLATED PLANT PROTEIN 22"/>
    <property type="match status" value="1"/>
</dbReference>
<dbReference type="Pfam" id="PF00403">
    <property type="entry name" value="HMA"/>
    <property type="match status" value="1"/>
</dbReference>
<dbReference type="SUPFAM" id="SSF55008">
    <property type="entry name" value="HMA, heavy metal-associated domain"/>
    <property type="match status" value="1"/>
</dbReference>
<dbReference type="PROSITE" id="PS50846">
    <property type="entry name" value="HMA_2"/>
    <property type="match status" value="1"/>
</dbReference>
<organism>
    <name type="scientific">Arabidopsis thaliana</name>
    <name type="common">Mouse-ear cress</name>
    <dbReference type="NCBI Taxonomy" id="3702"/>
    <lineage>
        <taxon>Eukaryota</taxon>
        <taxon>Viridiplantae</taxon>
        <taxon>Streptophyta</taxon>
        <taxon>Embryophyta</taxon>
        <taxon>Tracheophyta</taxon>
        <taxon>Spermatophyta</taxon>
        <taxon>Magnoliopsida</taxon>
        <taxon>eudicotyledons</taxon>
        <taxon>Gunneridae</taxon>
        <taxon>Pentapetalae</taxon>
        <taxon>rosids</taxon>
        <taxon>malvids</taxon>
        <taxon>Brassicales</taxon>
        <taxon>Brassicaceae</taxon>
        <taxon>Camelineae</taxon>
        <taxon>Arabidopsis</taxon>
    </lineage>
</organism>
<accession>Q93VP2</accession>
<accession>Q9ZRE3</accession>
<gene>
    <name evidence="6 7" type="primary">HIPP22</name>
    <name evidence="8" type="synonym">FP7</name>
    <name evidence="10" type="ordered locus">At1g22990</name>
    <name evidence="11" type="ORF">F19G10.25</name>
</gene>